<comment type="similarity">
    <text evidence="1">Belongs to the bacterial ribosomal protein bL32 family.</text>
</comment>
<protein>
    <recommendedName>
        <fullName evidence="1">Large ribosomal subunit protein bL32</fullName>
    </recommendedName>
    <alternativeName>
        <fullName evidence="3">50S ribosomal protein L32</fullName>
    </alternativeName>
</protein>
<organism>
    <name type="scientific">Salmonella enteritidis PT4 (strain P125109)</name>
    <dbReference type="NCBI Taxonomy" id="550537"/>
    <lineage>
        <taxon>Bacteria</taxon>
        <taxon>Pseudomonadati</taxon>
        <taxon>Pseudomonadota</taxon>
        <taxon>Gammaproteobacteria</taxon>
        <taxon>Enterobacterales</taxon>
        <taxon>Enterobacteriaceae</taxon>
        <taxon>Salmonella</taxon>
    </lineage>
</organism>
<name>RL32_SALEP</name>
<accession>B5QXE5</accession>
<gene>
    <name evidence="1" type="primary">rpmF</name>
    <name type="ordered locus">SEN1858</name>
</gene>
<feature type="chain" id="PRO_1000120168" description="Large ribosomal subunit protein bL32">
    <location>
        <begin position="1"/>
        <end position="57"/>
    </location>
</feature>
<feature type="region of interest" description="Disordered" evidence="2">
    <location>
        <begin position="1"/>
        <end position="38"/>
    </location>
</feature>
<sequence length="57" mass="6446">MAVQQNKPTRSKRGMRRSHDALTAVTSLSVDKTSGEKHLRHHITADGYYRGRKVIAK</sequence>
<dbReference type="EMBL" id="AM933172">
    <property type="protein sequence ID" value="CAR33438.1"/>
    <property type="molecule type" value="Genomic_DNA"/>
</dbReference>
<dbReference type="RefSeq" id="WP_000290727.1">
    <property type="nucleotide sequence ID" value="NC_011294.1"/>
</dbReference>
<dbReference type="SMR" id="B5QXE5"/>
<dbReference type="GeneID" id="93776319"/>
<dbReference type="KEGG" id="set:SEN1858"/>
<dbReference type="HOGENOM" id="CLU_129084_2_1_6"/>
<dbReference type="Proteomes" id="UP000000613">
    <property type="component" value="Chromosome"/>
</dbReference>
<dbReference type="GO" id="GO:0015934">
    <property type="term" value="C:large ribosomal subunit"/>
    <property type="evidence" value="ECO:0007669"/>
    <property type="project" value="InterPro"/>
</dbReference>
<dbReference type="GO" id="GO:0003735">
    <property type="term" value="F:structural constituent of ribosome"/>
    <property type="evidence" value="ECO:0007669"/>
    <property type="project" value="InterPro"/>
</dbReference>
<dbReference type="GO" id="GO:0006412">
    <property type="term" value="P:translation"/>
    <property type="evidence" value="ECO:0007669"/>
    <property type="project" value="UniProtKB-UniRule"/>
</dbReference>
<dbReference type="HAMAP" id="MF_00340">
    <property type="entry name" value="Ribosomal_bL32"/>
    <property type="match status" value="1"/>
</dbReference>
<dbReference type="InterPro" id="IPR002677">
    <property type="entry name" value="Ribosomal_bL32"/>
</dbReference>
<dbReference type="InterPro" id="IPR044957">
    <property type="entry name" value="Ribosomal_bL32_bact"/>
</dbReference>
<dbReference type="InterPro" id="IPR011332">
    <property type="entry name" value="Ribosomal_zn-bd"/>
</dbReference>
<dbReference type="NCBIfam" id="TIGR01031">
    <property type="entry name" value="rpmF_bact"/>
    <property type="match status" value="1"/>
</dbReference>
<dbReference type="PANTHER" id="PTHR35534">
    <property type="entry name" value="50S RIBOSOMAL PROTEIN L32"/>
    <property type="match status" value="1"/>
</dbReference>
<dbReference type="PANTHER" id="PTHR35534:SF1">
    <property type="entry name" value="LARGE RIBOSOMAL SUBUNIT PROTEIN BL32"/>
    <property type="match status" value="1"/>
</dbReference>
<dbReference type="Pfam" id="PF01783">
    <property type="entry name" value="Ribosomal_L32p"/>
    <property type="match status" value="1"/>
</dbReference>
<dbReference type="SUPFAM" id="SSF57829">
    <property type="entry name" value="Zn-binding ribosomal proteins"/>
    <property type="match status" value="1"/>
</dbReference>
<evidence type="ECO:0000255" key="1">
    <source>
        <dbReference type="HAMAP-Rule" id="MF_00340"/>
    </source>
</evidence>
<evidence type="ECO:0000256" key="2">
    <source>
        <dbReference type="SAM" id="MobiDB-lite"/>
    </source>
</evidence>
<evidence type="ECO:0000305" key="3"/>
<keyword id="KW-0687">Ribonucleoprotein</keyword>
<keyword id="KW-0689">Ribosomal protein</keyword>
<reference key="1">
    <citation type="journal article" date="2008" name="Genome Res.">
        <title>Comparative genome analysis of Salmonella enteritidis PT4 and Salmonella gallinarum 287/91 provides insights into evolutionary and host adaptation pathways.</title>
        <authorList>
            <person name="Thomson N.R."/>
            <person name="Clayton D.J."/>
            <person name="Windhorst D."/>
            <person name="Vernikos G."/>
            <person name="Davidson S."/>
            <person name="Churcher C."/>
            <person name="Quail M.A."/>
            <person name="Stevens M."/>
            <person name="Jones M.A."/>
            <person name="Watson M."/>
            <person name="Barron A."/>
            <person name="Layton A."/>
            <person name="Pickard D."/>
            <person name="Kingsley R.A."/>
            <person name="Bignell A."/>
            <person name="Clark L."/>
            <person name="Harris B."/>
            <person name="Ormond D."/>
            <person name="Abdellah Z."/>
            <person name="Brooks K."/>
            <person name="Cherevach I."/>
            <person name="Chillingworth T."/>
            <person name="Woodward J."/>
            <person name="Norberczak H."/>
            <person name="Lord A."/>
            <person name="Arrowsmith C."/>
            <person name="Jagels K."/>
            <person name="Moule S."/>
            <person name="Mungall K."/>
            <person name="Saunders M."/>
            <person name="Whitehead S."/>
            <person name="Chabalgoity J.A."/>
            <person name="Maskell D."/>
            <person name="Humphreys T."/>
            <person name="Roberts M."/>
            <person name="Barrow P.A."/>
            <person name="Dougan G."/>
            <person name="Parkhill J."/>
        </authorList>
    </citation>
    <scope>NUCLEOTIDE SEQUENCE [LARGE SCALE GENOMIC DNA]</scope>
    <source>
        <strain>P125109</strain>
    </source>
</reference>
<proteinExistence type="inferred from homology"/>